<proteinExistence type="evidence at transcript level"/>
<protein>
    <recommendedName>
        <fullName evidence="5">U3 snoRNP-associated protein-like EMB2271</fullName>
    </recommendedName>
    <alternativeName>
        <fullName evidence="5">Protein EMBRYO DEFECTIVE 2271</fullName>
    </alternativeName>
    <alternativeName>
        <fullName evidence="5">Protein YAO-like</fullName>
    </alternativeName>
</protein>
<name>YAOL_ARATH</name>
<reference key="1">
    <citation type="journal article" date="2005" name="Gene">
        <title>An approach towards experimental cDNA sequence determination of predicted genes: an example from Arabidopsis U3-55k homologues.</title>
        <authorList>
            <person name="Urbanek P."/>
            <person name="Paces J."/>
            <person name="Paces V."/>
        </authorList>
    </citation>
    <scope>NUCLEOTIDE SEQUENCE [MRNA]</scope>
    <source>
        <strain>cv. Columbia</strain>
    </source>
</reference>
<reference key="2">
    <citation type="journal article" date="1999" name="Nature">
        <title>Sequence and analysis of chromosome 4 of the plant Arabidopsis thaliana.</title>
        <authorList>
            <person name="Mayer K.F.X."/>
            <person name="Schueller C."/>
            <person name="Wambutt R."/>
            <person name="Murphy G."/>
            <person name="Volckaert G."/>
            <person name="Pohl T."/>
            <person name="Duesterhoeft A."/>
            <person name="Stiekema W."/>
            <person name="Entian K.-D."/>
            <person name="Terryn N."/>
            <person name="Harris B."/>
            <person name="Ansorge W."/>
            <person name="Brandt P."/>
            <person name="Grivell L.A."/>
            <person name="Rieger M."/>
            <person name="Weichselgartner M."/>
            <person name="de Simone V."/>
            <person name="Obermaier B."/>
            <person name="Mache R."/>
            <person name="Mueller M."/>
            <person name="Kreis M."/>
            <person name="Delseny M."/>
            <person name="Puigdomenech P."/>
            <person name="Watson M."/>
            <person name="Schmidtheini T."/>
            <person name="Reichert B."/>
            <person name="Portetelle D."/>
            <person name="Perez-Alonso M."/>
            <person name="Boutry M."/>
            <person name="Bancroft I."/>
            <person name="Vos P."/>
            <person name="Hoheisel J."/>
            <person name="Zimmermann W."/>
            <person name="Wedler H."/>
            <person name="Ridley P."/>
            <person name="Langham S.-A."/>
            <person name="McCullagh B."/>
            <person name="Bilham L."/>
            <person name="Robben J."/>
            <person name="van der Schueren J."/>
            <person name="Grymonprez B."/>
            <person name="Chuang Y.-J."/>
            <person name="Vandenbussche F."/>
            <person name="Braeken M."/>
            <person name="Weltjens I."/>
            <person name="Voet M."/>
            <person name="Bastiaens I."/>
            <person name="Aert R."/>
            <person name="Defoor E."/>
            <person name="Weitzenegger T."/>
            <person name="Bothe G."/>
            <person name="Ramsperger U."/>
            <person name="Hilbert H."/>
            <person name="Braun M."/>
            <person name="Holzer E."/>
            <person name="Brandt A."/>
            <person name="Peters S."/>
            <person name="van Staveren M."/>
            <person name="Dirkse W."/>
            <person name="Mooijman P."/>
            <person name="Klein Lankhorst R."/>
            <person name="Rose M."/>
            <person name="Hauf J."/>
            <person name="Koetter P."/>
            <person name="Berneiser S."/>
            <person name="Hempel S."/>
            <person name="Feldpausch M."/>
            <person name="Lamberth S."/>
            <person name="Van den Daele H."/>
            <person name="De Keyser A."/>
            <person name="Buysshaert C."/>
            <person name="Gielen J."/>
            <person name="Villarroel R."/>
            <person name="De Clercq R."/>
            <person name="van Montagu M."/>
            <person name="Rogers J."/>
            <person name="Cronin A."/>
            <person name="Quail M.A."/>
            <person name="Bray-Allen S."/>
            <person name="Clark L."/>
            <person name="Doggett J."/>
            <person name="Hall S."/>
            <person name="Kay M."/>
            <person name="Lennard N."/>
            <person name="McLay K."/>
            <person name="Mayes R."/>
            <person name="Pettett A."/>
            <person name="Rajandream M.A."/>
            <person name="Lyne M."/>
            <person name="Benes V."/>
            <person name="Rechmann S."/>
            <person name="Borkova D."/>
            <person name="Bloecker H."/>
            <person name="Scharfe M."/>
            <person name="Grimm M."/>
            <person name="Loehnert T.-H."/>
            <person name="Dose S."/>
            <person name="de Haan M."/>
            <person name="Maarse A.C."/>
            <person name="Schaefer M."/>
            <person name="Mueller-Auer S."/>
            <person name="Gabel C."/>
            <person name="Fuchs M."/>
            <person name="Fartmann B."/>
            <person name="Granderath K."/>
            <person name="Dauner D."/>
            <person name="Herzl A."/>
            <person name="Neumann S."/>
            <person name="Argiriou A."/>
            <person name="Vitale D."/>
            <person name="Liguori R."/>
            <person name="Piravandi E."/>
            <person name="Massenet O."/>
            <person name="Quigley F."/>
            <person name="Clabauld G."/>
            <person name="Muendlein A."/>
            <person name="Felber R."/>
            <person name="Schnabl S."/>
            <person name="Hiller R."/>
            <person name="Schmidt W."/>
            <person name="Lecharny A."/>
            <person name="Aubourg S."/>
            <person name="Chefdor F."/>
            <person name="Cooke R."/>
            <person name="Berger C."/>
            <person name="Monfort A."/>
            <person name="Casacuberta E."/>
            <person name="Gibbons T."/>
            <person name="Weber N."/>
            <person name="Vandenbol M."/>
            <person name="Bargues M."/>
            <person name="Terol J."/>
            <person name="Torres A."/>
            <person name="Perez-Perez A."/>
            <person name="Purnelle B."/>
            <person name="Bent E."/>
            <person name="Johnson S."/>
            <person name="Tacon D."/>
            <person name="Jesse T."/>
            <person name="Heijnen L."/>
            <person name="Schwarz S."/>
            <person name="Scholler P."/>
            <person name="Heber S."/>
            <person name="Francs P."/>
            <person name="Bielke C."/>
            <person name="Frishman D."/>
            <person name="Haase D."/>
            <person name="Lemcke K."/>
            <person name="Mewes H.-W."/>
            <person name="Stocker S."/>
            <person name="Zaccaria P."/>
            <person name="Bevan M."/>
            <person name="Wilson R.K."/>
            <person name="de la Bastide M."/>
            <person name="Habermann K."/>
            <person name="Parnell L."/>
            <person name="Dedhia N."/>
            <person name="Gnoj L."/>
            <person name="Schutz K."/>
            <person name="Huang E."/>
            <person name="Spiegel L."/>
            <person name="Sekhon M."/>
            <person name="Murray J."/>
            <person name="Sheet P."/>
            <person name="Cordes M."/>
            <person name="Abu-Threideh J."/>
            <person name="Stoneking T."/>
            <person name="Kalicki J."/>
            <person name="Graves T."/>
            <person name="Harmon G."/>
            <person name="Edwards J."/>
            <person name="Latreille P."/>
            <person name="Courtney L."/>
            <person name="Cloud J."/>
            <person name="Abbott A."/>
            <person name="Scott K."/>
            <person name="Johnson D."/>
            <person name="Minx P."/>
            <person name="Bentley D."/>
            <person name="Fulton B."/>
            <person name="Miller N."/>
            <person name="Greco T."/>
            <person name="Kemp K."/>
            <person name="Kramer J."/>
            <person name="Fulton L."/>
            <person name="Mardis E."/>
            <person name="Dante M."/>
            <person name="Pepin K."/>
            <person name="Hillier L.W."/>
            <person name="Nelson J."/>
            <person name="Spieth J."/>
            <person name="Ryan E."/>
            <person name="Andrews S."/>
            <person name="Geisel C."/>
            <person name="Layman D."/>
            <person name="Du H."/>
            <person name="Ali J."/>
            <person name="Berghoff A."/>
            <person name="Jones K."/>
            <person name="Drone K."/>
            <person name="Cotton M."/>
            <person name="Joshu C."/>
            <person name="Antonoiu B."/>
            <person name="Zidanic M."/>
            <person name="Strong C."/>
            <person name="Sun H."/>
            <person name="Lamar B."/>
            <person name="Yordan C."/>
            <person name="Ma P."/>
            <person name="Zhong J."/>
            <person name="Preston R."/>
            <person name="Vil D."/>
            <person name="Shekher M."/>
            <person name="Matero A."/>
            <person name="Shah R."/>
            <person name="Swaby I.K."/>
            <person name="O'Shaughnessy A."/>
            <person name="Rodriguez M."/>
            <person name="Hoffman J."/>
            <person name="Till S."/>
            <person name="Granat S."/>
            <person name="Shohdy N."/>
            <person name="Hasegawa A."/>
            <person name="Hameed A."/>
            <person name="Lodhi M."/>
            <person name="Johnson A."/>
            <person name="Chen E."/>
            <person name="Marra M.A."/>
            <person name="Martienssen R."/>
            <person name="McCombie W.R."/>
        </authorList>
    </citation>
    <scope>NUCLEOTIDE SEQUENCE [LARGE SCALE GENOMIC DNA]</scope>
    <source>
        <strain>cv. Columbia</strain>
    </source>
</reference>
<reference key="3">
    <citation type="journal article" date="2017" name="Plant J.">
        <title>Araport11: a complete reannotation of the Arabidopsis thaliana reference genome.</title>
        <authorList>
            <person name="Cheng C.Y."/>
            <person name="Krishnakumar V."/>
            <person name="Chan A.P."/>
            <person name="Thibaud-Nissen F."/>
            <person name="Schobel S."/>
            <person name="Town C.D."/>
        </authorList>
    </citation>
    <scope>GENOME REANNOTATION</scope>
    <source>
        <strain>cv. Columbia</strain>
    </source>
</reference>
<reference key="4">
    <citation type="journal article" date="2010" name="BMC Plant Biol.">
        <title>YAO is a nucleolar WD40-repeat protein critical for embryogenesis and gametogenesis in Arabidopsis.</title>
        <authorList>
            <person name="Li H.J."/>
            <person name="Liu N.Y."/>
            <person name="Shi D.Q."/>
            <person name="Liu J."/>
            <person name="Yang W.C."/>
        </authorList>
    </citation>
    <scope>FUNCTION</scope>
    <scope>DISRUPTION PHENOTYPE</scope>
</reference>
<organism>
    <name type="scientific">Arabidopsis thaliana</name>
    <name type="common">Mouse-ear cress</name>
    <dbReference type="NCBI Taxonomy" id="3702"/>
    <lineage>
        <taxon>Eukaryota</taxon>
        <taxon>Viridiplantae</taxon>
        <taxon>Streptophyta</taxon>
        <taxon>Embryophyta</taxon>
        <taxon>Tracheophyta</taxon>
        <taxon>Spermatophyta</taxon>
        <taxon>Magnoliopsida</taxon>
        <taxon>eudicotyledons</taxon>
        <taxon>Gunneridae</taxon>
        <taxon>Pentapetalae</taxon>
        <taxon>rosids</taxon>
        <taxon>malvids</taxon>
        <taxon>Brassicales</taxon>
        <taxon>Brassicaceae</taxon>
        <taxon>Camelineae</taxon>
        <taxon>Arabidopsis</taxon>
    </lineage>
</organism>
<dbReference type="EMBL" id="AY874865">
    <property type="protein sequence ID" value="AAY21208.1"/>
    <property type="molecule type" value="mRNA"/>
</dbReference>
<dbReference type="EMBL" id="AL021960">
    <property type="protein sequence ID" value="CAA17532.1"/>
    <property type="status" value="ALT_SEQ"/>
    <property type="molecule type" value="Genomic_DNA"/>
</dbReference>
<dbReference type="EMBL" id="AL161554">
    <property type="protein sequence ID" value="CAB79113.1"/>
    <property type="status" value="ALT_SEQ"/>
    <property type="molecule type" value="Genomic_DNA"/>
</dbReference>
<dbReference type="EMBL" id="CP002687">
    <property type="protein sequence ID" value="AEE84406.1"/>
    <property type="molecule type" value="Genomic_DNA"/>
</dbReference>
<dbReference type="PIR" id="T04944">
    <property type="entry name" value="T04944"/>
</dbReference>
<dbReference type="RefSeq" id="NP_193845.2">
    <property type="nucleotide sequence ID" value="NM_118232.2"/>
</dbReference>
<dbReference type="SMR" id="Q3MKM6"/>
<dbReference type="FunCoup" id="Q3MKM6">
    <property type="interactions" value="3359"/>
</dbReference>
<dbReference type="STRING" id="3702.Q3MKM6"/>
<dbReference type="PaxDb" id="3702-AT4G21130.1"/>
<dbReference type="ProteomicsDB" id="228662"/>
<dbReference type="EnsemblPlants" id="AT4G21130.1">
    <property type="protein sequence ID" value="AT4G21130.1"/>
    <property type="gene ID" value="AT4G21130"/>
</dbReference>
<dbReference type="GeneID" id="827861"/>
<dbReference type="Gramene" id="AT4G21130.1">
    <property type="protein sequence ID" value="AT4G21130.1"/>
    <property type="gene ID" value="AT4G21130"/>
</dbReference>
<dbReference type="KEGG" id="ath:AT4G21130"/>
<dbReference type="Araport" id="AT4G21130"/>
<dbReference type="TAIR" id="AT4G21130">
    <property type="gene designation" value="EMB2271"/>
</dbReference>
<dbReference type="eggNOG" id="KOG0299">
    <property type="taxonomic scope" value="Eukaryota"/>
</dbReference>
<dbReference type="HOGENOM" id="CLU_014017_1_1_1"/>
<dbReference type="InParanoid" id="Q3MKM6"/>
<dbReference type="OMA" id="DEYKWPS"/>
<dbReference type="PhylomeDB" id="Q3MKM6"/>
<dbReference type="PRO" id="PR:Q3MKM6"/>
<dbReference type="Proteomes" id="UP000006548">
    <property type="component" value="Chromosome 4"/>
</dbReference>
<dbReference type="ExpressionAtlas" id="Q3MKM6">
    <property type="expression patterns" value="baseline and differential"/>
</dbReference>
<dbReference type="GO" id="GO:0080008">
    <property type="term" value="C:Cul4-RING E3 ubiquitin ligase complex"/>
    <property type="evidence" value="ECO:0000250"/>
    <property type="project" value="TAIR"/>
</dbReference>
<dbReference type="GO" id="GO:0005730">
    <property type="term" value="C:nucleolus"/>
    <property type="evidence" value="ECO:0007669"/>
    <property type="project" value="UniProtKB-SubCell"/>
</dbReference>
<dbReference type="GO" id="GO:1990904">
    <property type="term" value="C:ribonucleoprotein complex"/>
    <property type="evidence" value="ECO:0007669"/>
    <property type="project" value="UniProtKB-KW"/>
</dbReference>
<dbReference type="GO" id="GO:0034511">
    <property type="term" value="F:U3 snoRNA binding"/>
    <property type="evidence" value="ECO:0007669"/>
    <property type="project" value="InterPro"/>
</dbReference>
<dbReference type="GO" id="GO:0006364">
    <property type="term" value="P:rRNA processing"/>
    <property type="evidence" value="ECO:0000250"/>
    <property type="project" value="TAIR"/>
</dbReference>
<dbReference type="FunFam" id="2.130.10.10:FF:000483">
    <property type="entry name" value="U3 snoRNP-associated protein-like EMB2271"/>
    <property type="match status" value="1"/>
</dbReference>
<dbReference type="Gene3D" id="2.130.10.10">
    <property type="entry name" value="YVTN repeat-like/Quinoprotein amine dehydrogenase"/>
    <property type="match status" value="1"/>
</dbReference>
<dbReference type="InterPro" id="IPR039241">
    <property type="entry name" value="Rrp9-like"/>
</dbReference>
<dbReference type="InterPro" id="IPR015943">
    <property type="entry name" value="WD40/YVTN_repeat-like_dom_sf"/>
</dbReference>
<dbReference type="InterPro" id="IPR019775">
    <property type="entry name" value="WD40_repeat_CS"/>
</dbReference>
<dbReference type="InterPro" id="IPR036322">
    <property type="entry name" value="WD40_repeat_dom_sf"/>
</dbReference>
<dbReference type="InterPro" id="IPR001680">
    <property type="entry name" value="WD40_rpt"/>
</dbReference>
<dbReference type="PANTHER" id="PTHR19865">
    <property type="entry name" value="U3 SMALL NUCLEOLAR RNA INTERACTING PROTEIN 2"/>
    <property type="match status" value="1"/>
</dbReference>
<dbReference type="PANTHER" id="PTHR19865:SF0">
    <property type="entry name" value="U3 SMALL NUCLEOLAR RNA-INTERACTING PROTEIN 2"/>
    <property type="match status" value="1"/>
</dbReference>
<dbReference type="Pfam" id="PF00400">
    <property type="entry name" value="WD40"/>
    <property type="match status" value="5"/>
</dbReference>
<dbReference type="SMART" id="SM00320">
    <property type="entry name" value="WD40"/>
    <property type="match status" value="6"/>
</dbReference>
<dbReference type="SUPFAM" id="SSF50978">
    <property type="entry name" value="WD40 repeat-like"/>
    <property type="match status" value="1"/>
</dbReference>
<dbReference type="PROSITE" id="PS00678">
    <property type="entry name" value="WD_REPEATS_1"/>
    <property type="match status" value="2"/>
</dbReference>
<dbReference type="PROSITE" id="PS50082">
    <property type="entry name" value="WD_REPEATS_2"/>
    <property type="match status" value="3"/>
</dbReference>
<dbReference type="PROSITE" id="PS50294">
    <property type="entry name" value="WD_REPEATS_REGION"/>
    <property type="match status" value="1"/>
</dbReference>
<gene>
    <name evidence="8" type="primary">EMB2271</name>
    <name evidence="7" type="ordered locus">At4g21130</name>
    <name evidence="9" type="ORF">F7J7.70</name>
</gene>
<feature type="chain" id="PRO_0000433091" description="U3 snoRNP-associated protein-like EMB2271">
    <location>
        <begin position="1"/>
        <end position="479"/>
    </location>
</feature>
<feature type="repeat" description="WD 1" evidence="3">
    <location>
        <begin position="143"/>
        <end position="182"/>
    </location>
</feature>
<feature type="repeat" description="WD 2" evidence="3">
    <location>
        <begin position="204"/>
        <end position="243"/>
    </location>
</feature>
<feature type="repeat" description="WD 3" evidence="3">
    <location>
        <begin position="246"/>
        <end position="285"/>
    </location>
</feature>
<feature type="repeat" description="WD 4" evidence="3">
    <location>
        <begin position="288"/>
        <end position="326"/>
    </location>
</feature>
<feature type="repeat" description="WD 5" evidence="3">
    <location>
        <begin position="328"/>
        <end position="366"/>
    </location>
</feature>
<feature type="repeat" description="WD 6" evidence="3">
    <location>
        <begin position="386"/>
        <end position="425"/>
    </location>
</feature>
<feature type="repeat" description="WD 7" evidence="3">
    <location>
        <begin position="431"/>
        <end position="471"/>
    </location>
</feature>
<feature type="region of interest" description="Disordered" evidence="4">
    <location>
        <begin position="1"/>
        <end position="73"/>
    </location>
</feature>
<feature type="compositionally biased region" description="Basic residues" evidence="4">
    <location>
        <begin position="8"/>
        <end position="17"/>
    </location>
</feature>
<feature type="compositionally biased region" description="Basic and acidic residues" evidence="4">
    <location>
        <begin position="18"/>
        <end position="38"/>
    </location>
</feature>
<feature type="compositionally biased region" description="Acidic residues" evidence="4">
    <location>
        <begin position="39"/>
        <end position="51"/>
    </location>
</feature>
<feature type="compositionally biased region" description="Basic and acidic residues" evidence="4">
    <location>
        <begin position="52"/>
        <end position="73"/>
    </location>
</feature>
<sequence length="479" mass="53582">MKLEKKKGIGAKRRGKKSSIDHDPFLEEETEKRRKFNYDDDDDIESVESEEEGKVGEEVEDEFAHETVGEKRKRLAEDTLNRIEEAKQREHEEDNEEDDDFRDSLVAKTLMQEQLEKSGRVRRANALRVQDLQSSDKFRVIVKHQHSVTGVALSDDDSRGFSVSKDGTILHWDVSSGKSDEYKWPSDEVLKSHGLKFQESWYTRHNKQSLALAVSSDGRYLATGGVDCHVHLWDIRTREHVQAFTGHCGIVSSLCFREGTAELFSGSYDGTLSIWNAEHRTYIESCFGHQSELLSIDALGRERVLSVGRDRTMQLYKVPESTRLIYRASESNFECCCFVNSDEFLSGSDNGSIALWSILKKKPVFIVNNAHHVIADHDSVNHNCTPACSWVSSVAVCRGSELAASGAGNGCVRLWGVESGSSAIQPLYELPLPGFVNSLAFAKSGRFLIAGVGQEPRLGRWGCLKSAQNGVAIHPLRLS</sequence>
<evidence type="ECO:0000250" key="1">
    <source>
        <dbReference type="UniProtKB" id="O43818"/>
    </source>
</evidence>
<evidence type="ECO:0000250" key="2">
    <source>
        <dbReference type="UniProtKB" id="Q9M0V4"/>
    </source>
</evidence>
<evidence type="ECO:0000255" key="3"/>
<evidence type="ECO:0000256" key="4">
    <source>
        <dbReference type="SAM" id="MobiDB-lite"/>
    </source>
</evidence>
<evidence type="ECO:0000305" key="5"/>
<evidence type="ECO:0000305" key="6">
    <source>
    </source>
</evidence>
<evidence type="ECO:0000312" key="7">
    <source>
        <dbReference type="Araport" id="AT4G21130"/>
    </source>
</evidence>
<evidence type="ECO:0000312" key="8">
    <source>
        <dbReference type="EMBL" id="AEE84406.1"/>
    </source>
</evidence>
<evidence type="ECO:0000312" key="9">
    <source>
        <dbReference type="EMBL" id="CAA17532.1"/>
    </source>
</evidence>
<comment type="function">
    <text evidence="1 2 6">Component of a nucleolar small nuclear ribonucleoprotein particle (snoRNP) thought to participate in the processing and modification of pre-ribosomal RNA (By similarity). Essential for embryogenesis (By similarity). May function during late embryogenesis (PubMed:20699009).</text>
</comment>
<comment type="subcellular location">
    <subcellularLocation>
        <location evidence="2">Nucleus</location>
        <location evidence="2">Nucleolus</location>
    </subcellularLocation>
</comment>
<comment type="disruption phenotype">
    <text evidence="6">Embryonic lethality.</text>
</comment>
<comment type="similarity">
    <text evidence="5">Belongs to the WD repeat RRP9 family.</text>
</comment>
<comment type="sequence caution" evidence="5">
    <conflict type="erroneous gene model prediction">
        <sequence resource="EMBL-CDS" id="CAA17532"/>
    </conflict>
</comment>
<comment type="sequence caution" evidence="5">
    <conflict type="erroneous gene model prediction">
        <sequence resource="EMBL-CDS" id="CAB79113"/>
    </conflict>
</comment>
<keyword id="KW-0539">Nucleus</keyword>
<keyword id="KW-1185">Reference proteome</keyword>
<keyword id="KW-0677">Repeat</keyword>
<keyword id="KW-0687">Ribonucleoprotein</keyword>
<keyword id="KW-0694">RNA-binding</keyword>
<keyword id="KW-0698">rRNA processing</keyword>
<keyword id="KW-0853">WD repeat</keyword>
<accession>Q3MKM6</accession>
<accession>O49554</accession>